<evidence type="ECO:0000250" key="1">
    <source>
        <dbReference type="UniProtKB" id="Q2FXT0"/>
    </source>
</evidence>
<evidence type="ECO:0000255" key="2">
    <source>
        <dbReference type="HAMAP-Rule" id="MF_00539"/>
    </source>
</evidence>
<evidence type="ECO:0000256" key="3">
    <source>
        <dbReference type="SAM" id="MobiDB-lite"/>
    </source>
</evidence>
<evidence type="ECO:0000305" key="4"/>
<comment type="PTM">
    <text evidence="1">The N-terminus is cleaved by ribosomal processing cysteine protease Prp.</text>
</comment>
<comment type="similarity">
    <text evidence="2">Belongs to the bacterial ribosomal protein bL27 family.</text>
</comment>
<comment type="sequence caution" evidence="4">
    <conflict type="erroneous initiation">
        <sequence resource="EMBL-CDS" id="BAC64395"/>
    </conflict>
    <text>Extended N-terminus.</text>
</comment>
<accession>P0DE29</accession>
<accession>P66138</accession>
<accession>Q9A0D4</accession>
<keyword id="KW-0687">Ribonucleoprotein</keyword>
<keyword id="KW-0689">Ribosomal protein</keyword>
<gene>
    <name evidence="2" type="primary">rpmA</name>
    <name evidence="2" type="synonym">rpl27</name>
    <name type="ordered locus">SPs1300</name>
</gene>
<proteinExistence type="inferred from homology"/>
<protein>
    <recommendedName>
        <fullName evidence="2">Large ribosomal subunit protein bL27</fullName>
    </recommendedName>
    <alternativeName>
        <fullName evidence="4">50S ribosomal protein L27</fullName>
    </alternativeName>
</protein>
<dbReference type="EMBL" id="BA000034">
    <property type="protein sequence ID" value="BAC64395.1"/>
    <property type="status" value="ALT_INIT"/>
    <property type="molecule type" value="Genomic_DNA"/>
</dbReference>
<dbReference type="SMR" id="P0DE29"/>
<dbReference type="KEGG" id="sps:SPs1300"/>
<dbReference type="HOGENOM" id="CLU_095424_4_0_9"/>
<dbReference type="GO" id="GO:0022625">
    <property type="term" value="C:cytosolic large ribosomal subunit"/>
    <property type="evidence" value="ECO:0007669"/>
    <property type="project" value="TreeGrafter"/>
</dbReference>
<dbReference type="GO" id="GO:0003735">
    <property type="term" value="F:structural constituent of ribosome"/>
    <property type="evidence" value="ECO:0007669"/>
    <property type="project" value="InterPro"/>
</dbReference>
<dbReference type="GO" id="GO:0006412">
    <property type="term" value="P:translation"/>
    <property type="evidence" value="ECO:0007669"/>
    <property type="project" value="UniProtKB-UniRule"/>
</dbReference>
<dbReference type="FunFam" id="2.40.50.100:FF:000004">
    <property type="entry name" value="50S ribosomal protein L27"/>
    <property type="match status" value="1"/>
</dbReference>
<dbReference type="Gene3D" id="2.40.50.100">
    <property type="match status" value="1"/>
</dbReference>
<dbReference type="HAMAP" id="MF_00539">
    <property type="entry name" value="Ribosomal_bL27"/>
    <property type="match status" value="1"/>
</dbReference>
<dbReference type="InterPro" id="IPR001684">
    <property type="entry name" value="Ribosomal_bL27"/>
</dbReference>
<dbReference type="InterPro" id="IPR018261">
    <property type="entry name" value="Ribosomal_bL27_CS"/>
</dbReference>
<dbReference type="NCBIfam" id="TIGR00062">
    <property type="entry name" value="L27"/>
    <property type="match status" value="1"/>
</dbReference>
<dbReference type="PANTHER" id="PTHR15893:SF0">
    <property type="entry name" value="LARGE RIBOSOMAL SUBUNIT PROTEIN BL27M"/>
    <property type="match status" value="1"/>
</dbReference>
<dbReference type="PANTHER" id="PTHR15893">
    <property type="entry name" value="RIBOSOMAL PROTEIN L27"/>
    <property type="match status" value="1"/>
</dbReference>
<dbReference type="Pfam" id="PF01016">
    <property type="entry name" value="Ribosomal_L27"/>
    <property type="match status" value="1"/>
</dbReference>
<dbReference type="PRINTS" id="PR00063">
    <property type="entry name" value="RIBOSOMALL27"/>
</dbReference>
<dbReference type="SUPFAM" id="SSF110324">
    <property type="entry name" value="Ribosomal L27 protein-like"/>
    <property type="match status" value="1"/>
</dbReference>
<dbReference type="PROSITE" id="PS00831">
    <property type="entry name" value="RIBOSOMAL_L27"/>
    <property type="match status" value="1"/>
</dbReference>
<reference key="1">
    <citation type="journal article" date="2003" name="Genome Res.">
        <title>Genome sequence of an M3 strain of Streptococcus pyogenes reveals a large-scale genomic rearrangement in invasive strains and new insights into phage evolution.</title>
        <authorList>
            <person name="Nakagawa I."/>
            <person name="Kurokawa K."/>
            <person name="Yamashita A."/>
            <person name="Nakata M."/>
            <person name="Tomiyasu Y."/>
            <person name="Okahashi N."/>
            <person name="Kawabata S."/>
            <person name="Yamazaki K."/>
            <person name="Shiba T."/>
            <person name="Yasunaga T."/>
            <person name="Hayashi H."/>
            <person name="Hattori M."/>
            <person name="Hamada S."/>
        </authorList>
    </citation>
    <scope>NUCLEOTIDE SEQUENCE [LARGE SCALE GENOMIC DNA]</scope>
    <source>
        <strain>SSI-1</strain>
    </source>
</reference>
<organism>
    <name type="scientific">Streptococcus pyogenes serotype M3 (strain SSI-1)</name>
    <dbReference type="NCBI Taxonomy" id="193567"/>
    <lineage>
        <taxon>Bacteria</taxon>
        <taxon>Bacillati</taxon>
        <taxon>Bacillota</taxon>
        <taxon>Bacilli</taxon>
        <taxon>Lactobacillales</taxon>
        <taxon>Streptococcaceae</taxon>
        <taxon>Streptococcus</taxon>
    </lineage>
</organism>
<sequence length="94" mass="10031">MNLANLQLFAHKKGGGSTSNGRDSQAKRLGAKAADGQTVSGGSILYRQRGTHIYPGVNVGRGGDDTLFAKVEGVVRFERKGRDKKQVSVYPVAK</sequence>
<feature type="propeptide" id="PRO_0000459965" evidence="1">
    <location>
        <begin position="1"/>
        <end position="9"/>
    </location>
</feature>
<feature type="chain" id="PRO_0000411504" description="Large ribosomal subunit protein bL27">
    <location>
        <begin position="10"/>
        <end position="94"/>
    </location>
</feature>
<feature type="region of interest" description="Disordered" evidence="3">
    <location>
        <begin position="11"/>
        <end position="34"/>
    </location>
</feature>
<name>RL27_STRPQ</name>